<dbReference type="EC" id="4.2.1.77" evidence="2 3"/>
<dbReference type="EMBL" id="AK058165">
    <property type="protein sequence ID" value="BAB71696.1"/>
    <property type="molecule type" value="mRNA"/>
</dbReference>
<dbReference type="EMBL" id="AL159140">
    <property type="status" value="NOT_ANNOTATED_CDS"/>
    <property type="molecule type" value="Genomic_DNA"/>
</dbReference>
<dbReference type="EMBL" id="BC012131">
    <property type="protein sequence ID" value="AAH12131.1"/>
    <property type="molecule type" value="mRNA"/>
</dbReference>
<dbReference type="CCDS" id="CCDS9739.1"/>
<dbReference type="RefSeq" id="NP_653182.1">
    <property type="nucleotide sequence ID" value="NM_144581.2"/>
</dbReference>
<dbReference type="PDB" id="7QPO">
    <property type="method" value="X-ray"/>
    <property type="resolution" value="3.00 A"/>
    <property type="chains" value="A/B=1-354"/>
</dbReference>
<dbReference type="PDBsum" id="7QPO"/>
<dbReference type="SMR" id="Q96EM0"/>
<dbReference type="BioGRID" id="125210">
    <property type="interactions" value="39"/>
</dbReference>
<dbReference type="FunCoup" id="Q96EM0">
    <property type="interactions" value="96"/>
</dbReference>
<dbReference type="IntAct" id="Q96EM0">
    <property type="interactions" value="26"/>
</dbReference>
<dbReference type="MINT" id="Q96EM0"/>
<dbReference type="STRING" id="9606.ENSP00000247194"/>
<dbReference type="DrugBank" id="DB00172">
    <property type="generic name" value="Proline"/>
</dbReference>
<dbReference type="GlyGen" id="Q96EM0">
    <property type="glycosylation" value="1 site, 1 O-linked glycan (1 site)"/>
</dbReference>
<dbReference type="iPTMnet" id="Q96EM0"/>
<dbReference type="PhosphoSitePlus" id="Q96EM0"/>
<dbReference type="BioMuta" id="L3HYPDH"/>
<dbReference type="DMDM" id="296452868"/>
<dbReference type="jPOST" id="Q96EM0"/>
<dbReference type="MassIVE" id="Q96EM0"/>
<dbReference type="PaxDb" id="9606-ENSP00000247194"/>
<dbReference type="PeptideAtlas" id="Q96EM0"/>
<dbReference type="ProteomicsDB" id="76425"/>
<dbReference type="Pumba" id="Q96EM0"/>
<dbReference type="Antibodypedia" id="68443">
    <property type="antibodies" value="44 antibodies from 14 providers"/>
</dbReference>
<dbReference type="DNASU" id="112849"/>
<dbReference type="Ensembl" id="ENST00000247194.9">
    <property type="protein sequence ID" value="ENSP00000247194.4"/>
    <property type="gene ID" value="ENSG00000126790.12"/>
</dbReference>
<dbReference type="GeneID" id="112849"/>
<dbReference type="KEGG" id="hsa:112849"/>
<dbReference type="MANE-Select" id="ENST00000247194.9">
    <property type="protein sequence ID" value="ENSP00000247194.4"/>
    <property type="RefSeq nucleotide sequence ID" value="NM_144581.2"/>
    <property type="RefSeq protein sequence ID" value="NP_653182.1"/>
</dbReference>
<dbReference type="UCSC" id="uc001xee.2">
    <property type="organism name" value="human"/>
</dbReference>
<dbReference type="AGR" id="HGNC:20488"/>
<dbReference type="CTD" id="112849"/>
<dbReference type="DisGeNET" id="112849"/>
<dbReference type="GeneCards" id="L3HYPDH"/>
<dbReference type="HGNC" id="HGNC:20488">
    <property type="gene designation" value="L3HYPDH"/>
</dbReference>
<dbReference type="HPA" id="ENSG00000126790">
    <property type="expression patterns" value="Low tissue specificity"/>
</dbReference>
<dbReference type="MIM" id="614811">
    <property type="type" value="gene"/>
</dbReference>
<dbReference type="neXtProt" id="NX_Q96EM0"/>
<dbReference type="OpenTargets" id="ENSG00000126790"/>
<dbReference type="PharmGKB" id="PA134961537"/>
<dbReference type="VEuPathDB" id="HostDB:ENSG00000126790"/>
<dbReference type="eggNOG" id="ENOG502QRPF">
    <property type="taxonomic scope" value="Eukaryota"/>
</dbReference>
<dbReference type="GeneTree" id="ENSGT00390000002032"/>
<dbReference type="HOGENOM" id="CLU_036729_0_1_1"/>
<dbReference type="InParanoid" id="Q96EM0"/>
<dbReference type="OMA" id="SHVLWTG"/>
<dbReference type="OrthoDB" id="6409228at2759"/>
<dbReference type="PAN-GO" id="Q96EM0">
    <property type="GO annotations" value="1 GO annotation based on evolutionary models"/>
</dbReference>
<dbReference type="PhylomeDB" id="Q96EM0"/>
<dbReference type="TreeFam" id="TF329167"/>
<dbReference type="BRENDA" id="4.2.1.77">
    <property type="organism ID" value="2681"/>
</dbReference>
<dbReference type="PathwayCommons" id="Q96EM0"/>
<dbReference type="SignaLink" id="Q96EM0"/>
<dbReference type="BioGRID-ORCS" id="112849">
    <property type="hits" value="14 hits in 1157 CRISPR screens"/>
</dbReference>
<dbReference type="ChiTaRS" id="L3HYPDH">
    <property type="organism name" value="human"/>
</dbReference>
<dbReference type="GenomeRNAi" id="112849"/>
<dbReference type="Pharos" id="Q96EM0">
    <property type="development level" value="Tdark"/>
</dbReference>
<dbReference type="PRO" id="PR:Q96EM0"/>
<dbReference type="Proteomes" id="UP000005640">
    <property type="component" value="Chromosome 14"/>
</dbReference>
<dbReference type="RNAct" id="Q96EM0">
    <property type="molecule type" value="protein"/>
</dbReference>
<dbReference type="Bgee" id="ENSG00000126790">
    <property type="expression patterns" value="Expressed in right uterine tube and 158 other cell types or tissues"/>
</dbReference>
<dbReference type="ExpressionAtlas" id="Q96EM0">
    <property type="expression patterns" value="baseline and differential"/>
</dbReference>
<dbReference type="GO" id="GO:0016836">
    <property type="term" value="F:hydro-lyase activity"/>
    <property type="evidence" value="ECO:0000314"/>
    <property type="project" value="UniProtKB"/>
</dbReference>
<dbReference type="GO" id="GO:0050346">
    <property type="term" value="F:trans-L-3-hydroxyproline dehydratase activity"/>
    <property type="evidence" value="ECO:0007669"/>
    <property type="project" value="UniProtKB-EC"/>
</dbReference>
<dbReference type="FunFam" id="3.10.310.10:FF:000007">
    <property type="entry name" value="Trans-L-3-hydroxyproline dehydratase"/>
    <property type="match status" value="1"/>
</dbReference>
<dbReference type="Gene3D" id="3.10.310.10">
    <property type="entry name" value="Diaminopimelate Epimerase, Chain A, domain 1"/>
    <property type="match status" value="2"/>
</dbReference>
<dbReference type="InterPro" id="IPR008794">
    <property type="entry name" value="Pro_racemase_fam"/>
</dbReference>
<dbReference type="PANTHER" id="PTHR33442">
    <property type="entry name" value="TRANS-3-HYDROXY-L-PROLINE DEHYDRATASE"/>
    <property type="match status" value="1"/>
</dbReference>
<dbReference type="PANTHER" id="PTHR33442:SF1">
    <property type="entry name" value="TRANS-3-HYDROXY-L-PROLINE DEHYDRATASE"/>
    <property type="match status" value="1"/>
</dbReference>
<dbReference type="Pfam" id="PF05544">
    <property type="entry name" value="Pro_racemase"/>
    <property type="match status" value="1"/>
</dbReference>
<dbReference type="PIRSF" id="PIRSF029792">
    <property type="entry name" value="Pro_racemase"/>
    <property type="match status" value="1"/>
</dbReference>
<dbReference type="SFLD" id="SFLDS00028">
    <property type="entry name" value="Proline_Racemase"/>
    <property type="match status" value="1"/>
</dbReference>
<dbReference type="SUPFAM" id="SSF54506">
    <property type="entry name" value="Diaminopimelate epimerase-like"/>
    <property type="match status" value="1"/>
</dbReference>
<evidence type="ECO:0000250" key="1"/>
<evidence type="ECO:0000269" key="2">
    <source>
    </source>
</evidence>
<evidence type="ECO:0000269" key="3">
    <source>
    </source>
</evidence>
<evidence type="ECO:0000303" key="4">
    <source>
    </source>
</evidence>
<evidence type="ECO:0000303" key="5">
    <source>
    </source>
</evidence>
<evidence type="ECO:0000305" key="6"/>
<evidence type="ECO:0000305" key="7">
    <source>
    </source>
</evidence>
<evidence type="ECO:0007829" key="8">
    <source>
        <dbReference type="PDB" id="7QPO"/>
    </source>
</evidence>
<gene>
    <name type="primary">L3HYPDH</name>
    <name type="synonym">C14orf149</name>
</gene>
<comment type="function">
    <text evidence="2">Catalyzes the dehydration of trans-3-hydroxy-L-proline to Delta(1)-pyrroline-2-carboxylate (Pyr2C). May be required to degrade trans-3-hydroxy-L-proline from the diet and originating from the degradation of proteins such as collagen-IV that contain it.</text>
</comment>
<comment type="catalytic activity">
    <reaction evidence="2 3">
        <text>trans-3-hydroxy-L-proline = 1-pyrroline-2-carboxylate + H2O</text>
        <dbReference type="Rhea" id="RHEA:10320"/>
        <dbReference type="ChEBI" id="CHEBI:15377"/>
        <dbReference type="ChEBI" id="CHEBI:39785"/>
        <dbReference type="ChEBI" id="CHEBI:57938"/>
        <dbReference type="EC" id="4.2.1.77"/>
    </reaction>
</comment>
<comment type="biophysicochemical properties">
    <kinetics>
        <KM evidence="2">7.23 mM for trans-3-hydroxy-L-proline</KM>
        <Vmax evidence="2">39.5 umol/min/mg enzyme</Vmax>
    </kinetics>
    <phDependence>
        <text evidence="2">Optimum pH is 8.0.</text>
    </phDependence>
</comment>
<comment type="subunit">
    <text evidence="3">Homodimer.</text>
</comment>
<comment type="tissue specificity">
    <text evidence="2">Ubiquitously expressed.</text>
</comment>
<comment type="miscellaneous">
    <text evidence="7">In contrast to the T.cruzi proline racemase enzyme, lacks the conserved Cys at position 273 which is replaced by a Thr residue, transforming the racemase activity into dehydratase activity.</text>
</comment>
<comment type="similarity">
    <text evidence="6">Belongs to the proline racemase family.</text>
</comment>
<reference key="1">
    <citation type="journal article" date="2004" name="Nat. Genet.">
        <title>Complete sequencing and characterization of 21,243 full-length human cDNAs.</title>
        <authorList>
            <person name="Ota T."/>
            <person name="Suzuki Y."/>
            <person name="Nishikawa T."/>
            <person name="Otsuki T."/>
            <person name="Sugiyama T."/>
            <person name="Irie R."/>
            <person name="Wakamatsu A."/>
            <person name="Hayashi K."/>
            <person name="Sato H."/>
            <person name="Nagai K."/>
            <person name="Kimura K."/>
            <person name="Makita H."/>
            <person name="Sekine M."/>
            <person name="Obayashi M."/>
            <person name="Nishi T."/>
            <person name="Shibahara T."/>
            <person name="Tanaka T."/>
            <person name="Ishii S."/>
            <person name="Yamamoto J."/>
            <person name="Saito K."/>
            <person name="Kawai Y."/>
            <person name="Isono Y."/>
            <person name="Nakamura Y."/>
            <person name="Nagahari K."/>
            <person name="Murakami K."/>
            <person name="Yasuda T."/>
            <person name="Iwayanagi T."/>
            <person name="Wagatsuma M."/>
            <person name="Shiratori A."/>
            <person name="Sudo H."/>
            <person name="Hosoiri T."/>
            <person name="Kaku Y."/>
            <person name="Kodaira H."/>
            <person name="Kondo H."/>
            <person name="Sugawara M."/>
            <person name="Takahashi M."/>
            <person name="Kanda K."/>
            <person name="Yokoi T."/>
            <person name="Furuya T."/>
            <person name="Kikkawa E."/>
            <person name="Omura Y."/>
            <person name="Abe K."/>
            <person name="Kamihara K."/>
            <person name="Katsuta N."/>
            <person name="Sato K."/>
            <person name="Tanikawa M."/>
            <person name="Yamazaki M."/>
            <person name="Ninomiya K."/>
            <person name="Ishibashi T."/>
            <person name="Yamashita H."/>
            <person name="Murakawa K."/>
            <person name="Fujimori K."/>
            <person name="Tanai H."/>
            <person name="Kimata M."/>
            <person name="Watanabe M."/>
            <person name="Hiraoka S."/>
            <person name="Chiba Y."/>
            <person name="Ishida S."/>
            <person name="Ono Y."/>
            <person name="Takiguchi S."/>
            <person name="Watanabe S."/>
            <person name="Yosida M."/>
            <person name="Hotuta T."/>
            <person name="Kusano J."/>
            <person name="Kanehori K."/>
            <person name="Takahashi-Fujii A."/>
            <person name="Hara H."/>
            <person name="Tanase T.-O."/>
            <person name="Nomura Y."/>
            <person name="Togiya S."/>
            <person name="Komai F."/>
            <person name="Hara R."/>
            <person name="Takeuchi K."/>
            <person name="Arita M."/>
            <person name="Imose N."/>
            <person name="Musashino K."/>
            <person name="Yuuki H."/>
            <person name="Oshima A."/>
            <person name="Sasaki N."/>
            <person name="Aotsuka S."/>
            <person name="Yoshikawa Y."/>
            <person name="Matsunawa H."/>
            <person name="Ichihara T."/>
            <person name="Shiohata N."/>
            <person name="Sano S."/>
            <person name="Moriya S."/>
            <person name="Momiyama H."/>
            <person name="Satoh N."/>
            <person name="Takami S."/>
            <person name="Terashima Y."/>
            <person name="Suzuki O."/>
            <person name="Nakagawa S."/>
            <person name="Senoh A."/>
            <person name="Mizoguchi H."/>
            <person name="Goto Y."/>
            <person name="Shimizu F."/>
            <person name="Wakebe H."/>
            <person name="Hishigaki H."/>
            <person name="Watanabe T."/>
            <person name="Sugiyama A."/>
            <person name="Takemoto M."/>
            <person name="Kawakami B."/>
            <person name="Yamazaki M."/>
            <person name="Watanabe K."/>
            <person name="Kumagai A."/>
            <person name="Itakura S."/>
            <person name="Fukuzumi Y."/>
            <person name="Fujimori Y."/>
            <person name="Komiyama M."/>
            <person name="Tashiro H."/>
            <person name="Tanigami A."/>
            <person name="Fujiwara T."/>
            <person name="Ono T."/>
            <person name="Yamada K."/>
            <person name="Fujii Y."/>
            <person name="Ozaki K."/>
            <person name="Hirao M."/>
            <person name="Ohmori Y."/>
            <person name="Kawabata A."/>
            <person name="Hikiji T."/>
            <person name="Kobatake N."/>
            <person name="Inagaki H."/>
            <person name="Ikema Y."/>
            <person name="Okamoto S."/>
            <person name="Okitani R."/>
            <person name="Kawakami T."/>
            <person name="Noguchi S."/>
            <person name="Itoh T."/>
            <person name="Shigeta K."/>
            <person name="Senba T."/>
            <person name="Matsumura K."/>
            <person name="Nakajima Y."/>
            <person name="Mizuno T."/>
            <person name="Morinaga M."/>
            <person name="Sasaki M."/>
            <person name="Togashi T."/>
            <person name="Oyama M."/>
            <person name="Hata H."/>
            <person name="Watanabe M."/>
            <person name="Komatsu T."/>
            <person name="Mizushima-Sugano J."/>
            <person name="Satoh T."/>
            <person name="Shirai Y."/>
            <person name="Takahashi Y."/>
            <person name="Nakagawa K."/>
            <person name="Okumura K."/>
            <person name="Nagase T."/>
            <person name="Nomura N."/>
            <person name="Kikuchi H."/>
            <person name="Masuho Y."/>
            <person name="Yamashita R."/>
            <person name="Nakai K."/>
            <person name="Yada T."/>
            <person name="Nakamura Y."/>
            <person name="Ohara O."/>
            <person name="Isogai T."/>
            <person name="Sugano S."/>
        </authorList>
    </citation>
    <scope>NUCLEOTIDE SEQUENCE [LARGE SCALE MRNA]</scope>
    <source>
        <tissue>Testis</tissue>
    </source>
</reference>
<reference key="2">
    <citation type="journal article" date="2003" name="Nature">
        <title>The DNA sequence and analysis of human chromosome 14.</title>
        <authorList>
            <person name="Heilig R."/>
            <person name="Eckenberg R."/>
            <person name="Petit J.-L."/>
            <person name="Fonknechten N."/>
            <person name="Da Silva C."/>
            <person name="Cattolico L."/>
            <person name="Levy M."/>
            <person name="Barbe V."/>
            <person name="De Berardinis V."/>
            <person name="Ureta-Vidal A."/>
            <person name="Pelletier E."/>
            <person name="Vico V."/>
            <person name="Anthouard V."/>
            <person name="Rowen L."/>
            <person name="Madan A."/>
            <person name="Qin S."/>
            <person name="Sun H."/>
            <person name="Du H."/>
            <person name="Pepin K."/>
            <person name="Artiguenave F."/>
            <person name="Robert C."/>
            <person name="Cruaud C."/>
            <person name="Bruels T."/>
            <person name="Jaillon O."/>
            <person name="Friedlander L."/>
            <person name="Samson G."/>
            <person name="Brottier P."/>
            <person name="Cure S."/>
            <person name="Segurens B."/>
            <person name="Aniere F."/>
            <person name="Samain S."/>
            <person name="Crespeau H."/>
            <person name="Abbasi N."/>
            <person name="Aiach N."/>
            <person name="Boscus D."/>
            <person name="Dickhoff R."/>
            <person name="Dors M."/>
            <person name="Dubois I."/>
            <person name="Friedman C."/>
            <person name="Gouyvenoux M."/>
            <person name="James R."/>
            <person name="Madan A."/>
            <person name="Mairey-Estrada B."/>
            <person name="Mangenot S."/>
            <person name="Martins N."/>
            <person name="Menard M."/>
            <person name="Oztas S."/>
            <person name="Ratcliffe A."/>
            <person name="Shaffer T."/>
            <person name="Trask B."/>
            <person name="Vacherie B."/>
            <person name="Bellemere C."/>
            <person name="Belser C."/>
            <person name="Besnard-Gonnet M."/>
            <person name="Bartol-Mavel D."/>
            <person name="Boutard M."/>
            <person name="Briez-Silla S."/>
            <person name="Combette S."/>
            <person name="Dufosse-Laurent V."/>
            <person name="Ferron C."/>
            <person name="Lechaplais C."/>
            <person name="Louesse C."/>
            <person name="Muselet D."/>
            <person name="Magdelenat G."/>
            <person name="Pateau E."/>
            <person name="Petit E."/>
            <person name="Sirvain-Trukniewicz P."/>
            <person name="Trybou A."/>
            <person name="Vega-Czarny N."/>
            <person name="Bataille E."/>
            <person name="Bluet E."/>
            <person name="Bordelais I."/>
            <person name="Dubois M."/>
            <person name="Dumont C."/>
            <person name="Guerin T."/>
            <person name="Haffray S."/>
            <person name="Hammadi R."/>
            <person name="Muanga J."/>
            <person name="Pellouin V."/>
            <person name="Robert D."/>
            <person name="Wunderle E."/>
            <person name="Gauguet G."/>
            <person name="Roy A."/>
            <person name="Sainte-Marthe L."/>
            <person name="Verdier J."/>
            <person name="Verdier-Discala C."/>
            <person name="Hillier L.W."/>
            <person name="Fulton L."/>
            <person name="McPherson J."/>
            <person name="Matsuda F."/>
            <person name="Wilson R."/>
            <person name="Scarpelli C."/>
            <person name="Gyapay G."/>
            <person name="Wincker P."/>
            <person name="Saurin W."/>
            <person name="Quetier F."/>
            <person name="Waterston R."/>
            <person name="Hood L."/>
            <person name="Weissenbach J."/>
        </authorList>
    </citation>
    <scope>NUCLEOTIDE SEQUENCE [LARGE SCALE GENOMIC DNA]</scope>
</reference>
<reference key="3">
    <citation type="journal article" date="2004" name="Genome Res.">
        <title>The status, quality, and expansion of the NIH full-length cDNA project: the Mammalian Gene Collection (MGC).</title>
        <authorList>
            <consortium name="The MGC Project Team"/>
        </authorList>
    </citation>
    <scope>NUCLEOTIDE SEQUENCE [LARGE SCALE MRNA]</scope>
    <source>
        <tissue>Skin</tissue>
    </source>
</reference>
<reference key="4">
    <citation type="journal article" date="2011" name="BMC Syst. Biol.">
        <title>Initial characterization of the human central proteome.</title>
        <authorList>
            <person name="Burkard T.R."/>
            <person name="Planyavsky M."/>
            <person name="Kaupe I."/>
            <person name="Breitwieser F.P."/>
            <person name="Buerckstuemmer T."/>
            <person name="Bennett K.L."/>
            <person name="Superti-Furga G."/>
            <person name="Colinge J."/>
        </authorList>
    </citation>
    <scope>IDENTIFICATION BY MASS SPECTROMETRY [LARGE SCALE ANALYSIS]</scope>
</reference>
<reference key="5">
    <citation type="journal article" date="2012" name="J. Biol. Chem.">
        <title>Identification of a human trans-3-Hydroxy-L-proline dehydratase, the first characterized member of a novel family of proline racemase-like enzymes.</title>
        <authorList>
            <person name="Visser W.F."/>
            <person name="Verhoeven-Duif N.M."/>
            <person name="de Koning T.J."/>
        </authorList>
    </citation>
    <scope>FUNCTION</scope>
    <scope>CATALYTIC ACTIVITY</scope>
    <scope>BIOPHYSICOCHEMICAL PROPERTIES</scope>
    <scope>TISSUE SPECIFICITY</scope>
    <scope>MUTAGENESIS OF THR-273</scope>
</reference>
<reference key="6">
    <citation type="journal article" date="2014" name="FEBS Open Bio">
        <title>Identification and characterization of trans-3-hydroxy-L-proline dehydratase and Delta(1)-pyrroline-2-carboxylate reductase involved in trans-3-hydroxy-L-proline metabolism of bacteria.</title>
        <authorList>
            <person name="Watanabe S."/>
            <person name="Tanimoto Y."/>
            <person name="Yamauchi S."/>
            <person name="Tozawa Y."/>
            <person name="Sawayama S."/>
            <person name="Watanabe Y."/>
        </authorList>
    </citation>
    <scope>CATALYTIC ACTIVITY</scope>
    <scope>SUBUNIT</scope>
</reference>
<name>T3HPD_HUMAN</name>
<accession>Q96EM0</accession>
<accession>Q96LJ5</accession>
<proteinExistence type="evidence at protein level"/>
<keyword id="KW-0002">3D-structure</keyword>
<keyword id="KW-0456">Lyase</keyword>
<keyword id="KW-1267">Proteomics identification</keyword>
<keyword id="KW-1185">Reference proteome</keyword>
<protein>
    <recommendedName>
        <fullName evidence="4 5">Trans-3-hydroxy-L-proline dehydratase</fullName>
        <ecNumber evidence="2 3">4.2.1.77</ecNumber>
    </recommendedName>
    <alternativeName>
        <fullName>Trans-L-3-hydroxyproline dehydratase</fullName>
    </alternativeName>
</protein>
<sequence>MESALAVPRLPPHDPGTPVLSVVDMHTGGEPLRIVLAGCPEVSGPTLLAKRRYMRQHLDHVRRRLMFEPRGHRDMYGAVLVPSELPDAHLGVLFLHNEGYSSMCGHAVLALGRFALDFGLVPAPPAGTREARVNIHCPCGLVTAFVACEDGRSHGPVRFHSVPAFVLATDLMVDVPGHGKVMVDIAYGGAFYAFVTAEKLGLDICSAKTRDLVDAASAVTEAVKAQFKINHPDSEDLAFLYGTILTDGKDAYTKEPTTNICVFADEQVDRSPTGSGVTARIALQYHKGLLELNQMRAFKSSATGSVFTGKAVREAKCGDFKAVIVEVSGQAHYTGTASFIIEDDDPLRDGFLLK</sequence>
<organism>
    <name type="scientific">Homo sapiens</name>
    <name type="common">Human</name>
    <dbReference type="NCBI Taxonomy" id="9606"/>
    <lineage>
        <taxon>Eukaryota</taxon>
        <taxon>Metazoa</taxon>
        <taxon>Chordata</taxon>
        <taxon>Craniata</taxon>
        <taxon>Vertebrata</taxon>
        <taxon>Euteleostomi</taxon>
        <taxon>Mammalia</taxon>
        <taxon>Eutheria</taxon>
        <taxon>Euarchontoglires</taxon>
        <taxon>Primates</taxon>
        <taxon>Haplorrhini</taxon>
        <taxon>Catarrhini</taxon>
        <taxon>Hominidae</taxon>
        <taxon>Homo</taxon>
    </lineage>
</organism>
<feature type="chain" id="PRO_0000288949" description="Trans-3-hydroxy-L-proline dehydratase">
    <location>
        <begin position="1"/>
        <end position="354"/>
    </location>
</feature>
<feature type="active site" description="Proton acceptor" evidence="1">
    <location>
        <position position="104"/>
    </location>
</feature>
<feature type="binding site" evidence="1">
    <location>
        <begin position="105"/>
        <end position="106"/>
    </location>
    <ligand>
        <name>substrate</name>
    </ligand>
</feature>
<feature type="binding site" evidence="1">
    <location>
        <position position="269"/>
    </location>
    <ligand>
        <name>substrate</name>
    </ligand>
</feature>
<feature type="binding site" evidence="1">
    <location>
        <begin position="274"/>
        <end position="275"/>
    </location>
    <ligand>
        <name>substrate</name>
    </ligand>
</feature>
<feature type="sequence variant" id="VAR_032540" description="In dbSNP:rs17096291.">
    <original>V</original>
    <variation>A</variation>
    <location>
        <position position="42"/>
    </location>
</feature>
<feature type="sequence variant" id="VAR_062192" description="In dbSNP:rs35622288.">
    <original>P</original>
    <variation>S</variation>
    <location>
        <position position="125"/>
    </location>
</feature>
<feature type="sequence variant" id="VAR_032541" description="In dbSNP:rs1046701.">
    <original>A</original>
    <variation>V</variation>
    <location>
        <position position="315"/>
    </location>
</feature>
<feature type="sequence variant" id="VAR_032542" description="In dbSNP:rs8660.">
    <original>I</original>
    <variation>V</variation>
    <location>
        <position position="341"/>
    </location>
</feature>
<feature type="mutagenesis site" description="Regains racemase activity, catalyzing the conversion of trans-3-hydroxy-L-proline to cis-3-hydroxy-D-proline. Also catalyzes racemization of L-proline to D-proline, albeit at a very low level. Has lost its original dehydratase activity." evidence="2">
    <original>T</original>
    <variation>C</variation>
    <location>
        <position position="273"/>
    </location>
</feature>
<feature type="sequence conflict" description="In Ref. 3; AAH12131." evidence="6" ref="3">
    <original>R</original>
    <variation>W</variation>
    <location>
        <position position="9"/>
    </location>
</feature>
<feature type="strand" evidence="8">
    <location>
        <begin position="20"/>
        <end position="27"/>
    </location>
</feature>
<feature type="strand" evidence="8">
    <location>
        <begin position="30"/>
        <end position="37"/>
    </location>
</feature>
<feature type="helix" evidence="8">
    <location>
        <begin position="47"/>
        <end position="57"/>
    </location>
</feature>
<feature type="helix" evidence="8">
    <location>
        <begin position="59"/>
        <end position="66"/>
    </location>
</feature>
<feature type="turn" evidence="8">
    <location>
        <begin position="68"/>
        <end position="70"/>
    </location>
</feature>
<feature type="strand" evidence="8">
    <location>
        <begin position="77"/>
        <end position="81"/>
    </location>
</feature>
<feature type="strand" evidence="8">
    <location>
        <begin position="89"/>
        <end position="95"/>
    </location>
</feature>
<feature type="strand" evidence="8">
    <location>
        <begin position="97"/>
        <end position="99"/>
    </location>
</feature>
<feature type="helix" evidence="8">
    <location>
        <begin position="107"/>
        <end position="117"/>
    </location>
</feature>
<feature type="strand" evidence="8">
    <location>
        <begin position="129"/>
        <end position="136"/>
    </location>
</feature>
<feature type="strand" evidence="8">
    <location>
        <begin position="141"/>
        <end position="147"/>
    </location>
</feature>
<feature type="strand" evidence="8">
    <location>
        <begin position="157"/>
        <end position="160"/>
    </location>
</feature>
<feature type="strand" evidence="8">
    <location>
        <begin position="164"/>
        <end position="175"/>
    </location>
</feature>
<feature type="turn" evidence="8">
    <location>
        <begin position="176"/>
        <end position="178"/>
    </location>
</feature>
<feature type="strand" evidence="8">
    <location>
        <begin position="179"/>
        <end position="197"/>
    </location>
</feature>
<feature type="helix" evidence="8">
    <location>
        <begin position="198"/>
        <end position="200"/>
    </location>
</feature>
<feature type="turn" evidence="8">
    <location>
        <begin position="204"/>
        <end position="206"/>
    </location>
</feature>
<feature type="helix" evidence="8">
    <location>
        <begin position="209"/>
        <end position="225"/>
    </location>
</feature>
<feature type="strand" evidence="8">
    <location>
        <begin position="242"/>
        <end position="246"/>
    </location>
</feature>
<feature type="strand" evidence="8">
    <location>
        <begin position="257"/>
        <end position="263"/>
    </location>
</feature>
<feature type="turn" evidence="8">
    <location>
        <begin position="264"/>
        <end position="266"/>
    </location>
</feature>
<feature type="helix" evidence="8">
    <location>
        <begin position="274"/>
        <end position="286"/>
    </location>
</feature>
<feature type="strand" evidence="8">
    <location>
        <begin position="295"/>
        <end position="300"/>
    </location>
</feature>
<feature type="turn" evidence="8">
    <location>
        <begin position="301"/>
        <end position="303"/>
    </location>
</feature>
<feature type="strand" evidence="8">
    <location>
        <begin position="306"/>
        <end position="317"/>
    </location>
</feature>
<feature type="strand" evidence="8">
    <location>
        <begin position="320"/>
        <end position="329"/>
    </location>
</feature>
<feature type="strand" evidence="8">
    <location>
        <begin position="331"/>
        <end position="339"/>
    </location>
</feature>
<feature type="turn" evidence="8">
    <location>
        <begin position="346"/>
        <end position="349"/>
    </location>
</feature>